<gene>
    <name type="primary">per</name>
</gene>
<sequence length="107" mass="11407">SKSSTGTPPSYNQLNYNENLMRFFKSKPVTVGKEESMAVEQSYNDVELQRDPSPDQCCDYSGESGSAGNLSSGSNVQMEIITNGSNTGTGTSSGSFQPPLLTEALLN</sequence>
<evidence type="ECO:0000250" key="1"/>
<evidence type="ECO:0000256" key="2">
    <source>
        <dbReference type="SAM" id="MobiDB-lite"/>
    </source>
</evidence>
<dbReference type="EMBL" id="U11803">
    <property type="protein sequence ID" value="AAA76590.1"/>
    <property type="molecule type" value="Genomic_DNA"/>
</dbReference>
<dbReference type="GO" id="GO:0005634">
    <property type="term" value="C:nucleus"/>
    <property type="evidence" value="ECO:0007669"/>
    <property type="project" value="UniProtKB-SubCell"/>
</dbReference>
<dbReference type="GO" id="GO:0048471">
    <property type="term" value="C:perinuclear region of cytoplasm"/>
    <property type="evidence" value="ECO:0007669"/>
    <property type="project" value="UniProtKB-SubCell"/>
</dbReference>
<dbReference type="GO" id="GO:0048511">
    <property type="term" value="P:rhythmic process"/>
    <property type="evidence" value="ECO:0007669"/>
    <property type="project" value="UniProtKB-KW"/>
</dbReference>
<name>PER_BERVA</name>
<organism>
    <name type="scientific">Beris vallata</name>
    <name type="common">Common orange legionnaire</name>
    <name type="synonym">Musca vallata</name>
    <dbReference type="NCBI Taxonomy" id="34689"/>
    <lineage>
        <taxon>Eukaryota</taxon>
        <taxon>Metazoa</taxon>
        <taxon>Ecdysozoa</taxon>
        <taxon>Arthropoda</taxon>
        <taxon>Hexapoda</taxon>
        <taxon>Insecta</taxon>
        <taxon>Pterygota</taxon>
        <taxon>Neoptera</taxon>
        <taxon>Endopterygota</taxon>
        <taxon>Diptera</taxon>
        <taxon>Brachycera</taxon>
        <taxon>Stratiomyomorpha</taxon>
        <taxon>Stratiomyidae</taxon>
        <taxon>Beris</taxon>
    </lineage>
</organism>
<accession>Q17285</accession>
<comment type="function">
    <text evidence="1">Essential for biological clock functions. Determines the period length of circadian and ultradian rhythms; an increase in PER dosage leads to shortened circadian rhythms and a decrease leads to lengthened circadian rhythms. Essential for the circadian rhythmicity of locomotor activity, eclosion behavior, and for the rhythmic component of the male courtship song that originates in the thoracic nervous system. The biological cycle depends on the rhythmic formation and nuclear localization of the TIM-PER complex. Light induces the degradation of TIM, which promotes elimination of PER. Nuclear activity of the heterodimer coordinatively regulates PER and TIM transcription through a negative feedback loop. Behaves as a negative element in circadian transcriptional loop. Does not appear to bind DNA, suggesting indirect transcriptional inhibition (By similarity).</text>
</comment>
<comment type="subunit">
    <text evidence="1">Forms a heterodimer with timeless (TIM); the complex then translocates into the nucleus.</text>
</comment>
<comment type="subcellular location">
    <subcellularLocation>
        <location evidence="1">Nucleus</location>
    </subcellularLocation>
    <subcellularLocation>
        <location evidence="1">Cytoplasm</location>
        <location evidence="1">Perinuclear region</location>
    </subcellularLocation>
    <text evidence="1">Nuclear at specific periods of the day. First accumulates in the perinuclear region about one hour before translocation into the nucleus. Interaction with Tim is required for nuclear localization (By similarity).</text>
</comment>
<comment type="PTM">
    <text evidence="1">Phosphorylated with a circadian rhythmicity, probably by the double-time protein (dbt). Phosphorylation could be implicated in the stability of per monomer and in the formation of heterodimer per-tim (By similarity).</text>
</comment>
<proteinExistence type="inferred from homology"/>
<reference key="1">
    <citation type="journal article" date="1994" name="Mol. Biol. Evol.">
        <title>Big flies, small repeats: the 'Thr-Gly' region of the period gene in Diptera.</title>
        <authorList>
            <person name="Nielsen J."/>
            <person name="Peixoto A.A."/>
            <person name="Piccin A."/>
            <person name="Costa R."/>
            <person name="Kyriacou C.P."/>
            <person name="Chalmers D."/>
        </authorList>
    </citation>
    <scope>NUCLEOTIDE SEQUENCE [GENOMIC DNA]</scope>
</reference>
<feature type="chain" id="PRO_0000162617" description="Period circadian protein">
    <location>
        <begin position="1" status="less than"/>
        <end position="107" status="greater than"/>
    </location>
</feature>
<feature type="region of interest" description="Disordered" evidence="2">
    <location>
        <begin position="81"/>
        <end position="107"/>
    </location>
</feature>
<feature type="compositionally biased region" description="Low complexity" evidence="2">
    <location>
        <begin position="82"/>
        <end position="95"/>
    </location>
</feature>
<feature type="non-terminal residue">
    <location>
        <position position="1"/>
    </location>
</feature>
<feature type="non-terminal residue">
    <location>
        <position position="107"/>
    </location>
</feature>
<keyword id="KW-0090">Biological rhythms</keyword>
<keyword id="KW-0963">Cytoplasm</keyword>
<keyword id="KW-0539">Nucleus</keyword>
<keyword id="KW-0597">Phosphoprotein</keyword>
<keyword id="KW-0677">Repeat</keyword>
<protein>
    <recommendedName>
        <fullName>Period circadian protein</fullName>
    </recommendedName>
</protein>